<gene>
    <name type="primary">Zc3hav1</name>
</gene>
<feature type="chain" id="PRO_0000331461" description="Zinc finger CCCH-type antiviral protein 1">
    <location>
        <begin position="1"/>
        <end position="946"/>
    </location>
</feature>
<feature type="domain" description="WWE" evidence="5">
    <location>
        <begin position="684"/>
        <end position="771"/>
    </location>
</feature>
<feature type="domain" description="PARP catalytic" evidence="6">
    <location>
        <begin position="805"/>
        <end position="946"/>
    </location>
</feature>
<feature type="zinc finger region" description="C3H1-type 1" evidence="7">
    <location>
        <begin position="73"/>
        <end position="86"/>
    </location>
</feature>
<feature type="zinc finger region" description="C3H1-type 1" evidence="7">
    <location>
        <begin position="87"/>
        <end position="113"/>
    </location>
</feature>
<feature type="zinc finger region" description="C3H1-type 3" evidence="7">
    <location>
        <begin position="150"/>
        <end position="172"/>
    </location>
</feature>
<feature type="zinc finger region" description="C3H1-type 2" evidence="7">
    <location>
        <begin position="173"/>
        <end position="194"/>
    </location>
</feature>
<feature type="region of interest" description="N-terminal domain">
    <location>
        <begin position="1"/>
        <end position="254"/>
    </location>
</feature>
<feature type="region of interest" description="Disordered" evidence="8">
    <location>
        <begin position="221"/>
        <end position="283"/>
    </location>
</feature>
<feature type="region of interest" description="Binding to EXOSC5" evidence="1">
    <location>
        <begin position="224"/>
        <end position="254"/>
    </location>
</feature>
<feature type="region of interest" description="Disordered" evidence="8">
    <location>
        <begin position="302"/>
        <end position="354"/>
    </location>
</feature>
<feature type="region of interest" description="Disordered" evidence="8">
    <location>
        <begin position="461"/>
        <end position="491"/>
    </location>
</feature>
<feature type="region of interest" description="Disordered" evidence="8">
    <location>
        <begin position="523"/>
        <end position="570"/>
    </location>
</feature>
<feature type="short sequence motif" description="Nuclear localization signal" evidence="1">
    <location>
        <begin position="69"/>
        <end position="76"/>
    </location>
</feature>
<feature type="short sequence motif" description="Nuclear export signal" evidence="1">
    <location>
        <begin position="283"/>
        <end position="290"/>
    </location>
</feature>
<feature type="short sequence motif" description="Nuclear localization signal" evidence="4">
    <location>
        <begin position="412"/>
        <end position="413"/>
    </location>
</feature>
<feature type="compositionally biased region" description="Basic and acidic residues" evidence="8">
    <location>
        <begin position="242"/>
        <end position="257"/>
    </location>
</feature>
<feature type="compositionally biased region" description="Polar residues" evidence="8">
    <location>
        <begin position="466"/>
        <end position="477"/>
    </location>
</feature>
<feature type="compositionally biased region" description="Polar residues" evidence="8">
    <location>
        <begin position="524"/>
        <end position="533"/>
    </location>
</feature>
<feature type="compositionally biased region" description="Polar residues" evidence="8">
    <location>
        <begin position="554"/>
        <end position="567"/>
    </location>
</feature>
<feature type="modified residue" description="Phosphoserine" evidence="16">
    <location>
        <position position="257"/>
    </location>
</feature>
<feature type="modified residue" description="Phosphoserine; by GSK3-beta" evidence="1">
    <location>
        <position position="262"/>
    </location>
</feature>
<feature type="modified residue" description="Phosphoserine" evidence="16">
    <location>
        <position position="265"/>
    </location>
</feature>
<feature type="modified residue" description="Phosphoserine" evidence="16">
    <location>
        <position position="269"/>
    </location>
</feature>
<feature type="modified residue" description="Phosphoserine" evidence="15 16">
    <location>
        <position position="273"/>
    </location>
</feature>
<feature type="modified residue" description="Phosphothreonine" evidence="16">
    <location>
        <position position="277"/>
    </location>
</feature>
<feature type="modified residue" description="Phosphoserine" evidence="12 15 16">
    <location>
        <position position="324"/>
    </location>
</feature>
<feature type="modified residue" description="Phosphoserine" evidence="16">
    <location>
        <position position="350"/>
    </location>
</feature>
<feature type="modified residue" description="Phosphoserine" evidence="2">
    <location>
        <position position="425"/>
    </location>
</feature>
<feature type="modified residue" description="Phosphotyrosine" evidence="13 14">
    <location>
        <position position="508"/>
    </location>
</feature>
<feature type="modified residue" description="Phosphoserine" evidence="14">
    <location>
        <position position="553"/>
    </location>
</feature>
<feature type="modified residue" description="Phosphoserine" evidence="2">
    <location>
        <position position="583"/>
    </location>
</feature>
<feature type="modified residue" description="Phosphoserine" evidence="2">
    <location>
        <position position="680"/>
    </location>
</feature>
<feature type="splice variant" id="VSP_033213" description="In isoform 2." evidence="10">
    <original>D</original>
    <variation>E</variation>
    <location>
        <position position="789"/>
    </location>
</feature>
<feature type="splice variant" id="VSP_033214" description="In isoform 2." evidence="10">
    <location>
        <begin position="790"/>
        <end position="946"/>
    </location>
</feature>
<feature type="helix" evidence="17">
    <location>
        <begin position="6"/>
        <end position="16"/>
    </location>
</feature>
<feature type="turn" evidence="17">
    <location>
        <begin position="17"/>
        <end position="19"/>
    </location>
</feature>
<feature type="strand" evidence="17">
    <location>
        <begin position="20"/>
        <end position="22"/>
    </location>
</feature>
<feature type="helix" evidence="17">
    <location>
        <begin position="23"/>
        <end position="27"/>
    </location>
</feature>
<feature type="strand" evidence="17">
    <location>
        <begin position="30"/>
        <end position="32"/>
    </location>
</feature>
<feature type="helix" evidence="17">
    <location>
        <begin position="34"/>
        <end position="44"/>
    </location>
</feature>
<feature type="turn" evidence="17">
    <location>
        <begin position="46"/>
        <end position="48"/>
    </location>
</feature>
<feature type="strand" evidence="17">
    <location>
        <begin position="49"/>
        <end position="52"/>
    </location>
</feature>
<feature type="strand" evidence="17">
    <location>
        <begin position="63"/>
        <end position="66"/>
    </location>
</feature>
<feature type="helix" evidence="17">
    <location>
        <begin position="89"/>
        <end position="92"/>
    </location>
</feature>
<feature type="strand" evidence="17">
    <location>
        <begin position="99"/>
        <end position="101"/>
    </location>
</feature>
<feature type="strand" evidence="17">
    <location>
        <begin position="103"/>
        <end position="105"/>
    </location>
</feature>
<feature type="helix" evidence="17">
    <location>
        <begin position="115"/>
        <end position="123"/>
    </location>
</feature>
<feature type="helix" evidence="17">
    <location>
        <begin position="131"/>
        <end position="141"/>
    </location>
</feature>
<feature type="helix" evidence="17">
    <location>
        <begin position="143"/>
        <end position="145"/>
    </location>
</feature>
<feature type="helix" evidence="17">
    <location>
        <begin position="175"/>
        <end position="178"/>
    </location>
</feature>
<feature type="helix" evidence="17">
    <location>
        <begin position="196"/>
        <end position="205"/>
    </location>
</feature>
<feature type="helix" evidence="17">
    <location>
        <begin position="209"/>
        <end position="223"/>
    </location>
</feature>
<feature type="strand" evidence="18">
    <location>
        <begin position="602"/>
        <end position="606"/>
    </location>
</feature>
<feature type="strand" evidence="18">
    <location>
        <begin position="610"/>
        <end position="612"/>
    </location>
</feature>
<feature type="strand" evidence="18">
    <location>
        <begin position="624"/>
        <end position="632"/>
    </location>
</feature>
<feature type="strand" evidence="18">
    <location>
        <begin position="635"/>
        <end position="638"/>
    </location>
</feature>
<feature type="helix" evidence="18">
    <location>
        <begin position="642"/>
        <end position="649"/>
    </location>
</feature>
<feature type="strand" evidence="18">
    <location>
        <begin position="656"/>
        <end position="659"/>
    </location>
</feature>
<feature type="strand" evidence="18">
    <location>
        <begin position="662"/>
        <end position="665"/>
    </location>
</feature>
<feature type="turn" evidence="18">
    <location>
        <begin position="666"/>
        <end position="669"/>
    </location>
</feature>
<feature type="strand" evidence="18">
    <location>
        <begin position="674"/>
        <end position="681"/>
    </location>
</feature>
<feature type="strand" evidence="18">
    <location>
        <begin position="684"/>
        <end position="686"/>
    </location>
</feature>
<feature type="helix" evidence="18">
    <location>
        <begin position="691"/>
        <end position="693"/>
    </location>
</feature>
<feature type="strand" evidence="18">
    <location>
        <begin position="697"/>
        <end position="702"/>
    </location>
</feature>
<feature type="strand" evidence="18">
    <location>
        <begin position="706"/>
        <end position="710"/>
    </location>
</feature>
<feature type="helix" evidence="18">
    <location>
        <begin position="725"/>
        <end position="734"/>
    </location>
</feature>
<feature type="strand" evidence="18">
    <location>
        <begin position="739"/>
        <end position="744"/>
    </location>
</feature>
<feature type="strand" evidence="18">
    <location>
        <begin position="747"/>
        <end position="752"/>
    </location>
</feature>
<feature type="turn" evidence="18">
    <location>
        <begin position="753"/>
        <end position="756"/>
    </location>
</feature>
<feature type="strand" evidence="18">
    <location>
        <begin position="757"/>
        <end position="760"/>
    </location>
</feature>
<feature type="turn" evidence="18">
    <location>
        <begin position="761"/>
        <end position="763"/>
    </location>
</feature>
<feature type="strand" evidence="18">
    <location>
        <begin position="766"/>
        <end position="773"/>
    </location>
</feature>
<feature type="helix" evidence="18">
    <location>
        <begin position="778"/>
        <end position="782"/>
    </location>
</feature>
<proteinExistence type="evidence at protein level"/>
<dbReference type="EMBL" id="AK004770">
    <property type="protein sequence ID" value="BAB23549.1"/>
    <property type="molecule type" value="mRNA"/>
</dbReference>
<dbReference type="EMBL" id="AK080334">
    <property type="protein sequence ID" value="BAC37881.1"/>
    <property type="molecule type" value="mRNA"/>
</dbReference>
<dbReference type="EMBL" id="AK143568">
    <property type="protein sequence ID" value="BAE25440.1"/>
    <property type="molecule type" value="mRNA"/>
</dbReference>
<dbReference type="EMBL" id="AK169402">
    <property type="protein sequence ID" value="BAE41148.1"/>
    <property type="molecule type" value="mRNA"/>
</dbReference>
<dbReference type="EMBL" id="AK172379">
    <property type="protein sequence ID" value="BAE42974.1"/>
    <property type="molecule type" value="mRNA"/>
</dbReference>
<dbReference type="EMBL" id="AK020263">
    <property type="protein sequence ID" value="BAB32047.2"/>
    <property type="molecule type" value="mRNA"/>
</dbReference>
<dbReference type="CCDS" id="CCDS20012.1">
    <molecule id="Q3UPF5-2"/>
</dbReference>
<dbReference type="CCDS" id="CCDS80522.1">
    <molecule id="Q3UPF5-1"/>
</dbReference>
<dbReference type="RefSeq" id="NP_082697.1">
    <molecule id="Q3UPF5-1"/>
    <property type="nucleotide sequence ID" value="NM_028421.1"/>
</dbReference>
<dbReference type="RefSeq" id="NP_083140.1">
    <molecule id="Q3UPF5-2"/>
    <property type="nucleotide sequence ID" value="NM_028864.2"/>
</dbReference>
<dbReference type="PDB" id="6L1W">
    <property type="method" value="X-ray"/>
    <property type="resolution" value="2.19 A"/>
    <property type="chains" value="A=1-227"/>
</dbReference>
<dbReference type="PDB" id="7SZ2">
    <property type="method" value="X-ray"/>
    <property type="resolution" value="2.20 A"/>
    <property type="chains" value="A/B=592-789"/>
</dbReference>
<dbReference type="PDB" id="7SZ3">
    <property type="method" value="X-ray"/>
    <property type="resolution" value="2.20 A"/>
    <property type="chains" value="A/B=592-789"/>
</dbReference>
<dbReference type="PDBsum" id="6L1W"/>
<dbReference type="PDBsum" id="7SZ2"/>
<dbReference type="PDBsum" id="7SZ3"/>
<dbReference type="SMR" id="Q3UPF5"/>
<dbReference type="BioGRID" id="219626">
    <property type="interactions" value="7"/>
</dbReference>
<dbReference type="FunCoup" id="Q3UPF5">
    <property type="interactions" value="1448"/>
</dbReference>
<dbReference type="IntAct" id="Q3UPF5">
    <property type="interactions" value="3"/>
</dbReference>
<dbReference type="MINT" id="Q3UPF5"/>
<dbReference type="STRING" id="10090.ENSMUSP00000110550"/>
<dbReference type="GlyGen" id="Q3UPF5">
    <property type="glycosylation" value="1 site, 1 O-linked glycan (1 site)"/>
</dbReference>
<dbReference type="iPTMnet" id="Q3UPF5"/>
<dbReference type="PhosphoSitePlus" id="Q3UPF5"/>
<dbReference type="SwissPalm" id="Q3UPF5"/>
<dbReference type="jPOST" id="Q3UPF5"/>
<dbReference type="PaxDb" id="10090-ENSMUSP00000031850"/>
<dbReference type="PeptideAtlas" id="Q3UPF5"/>
<dbReference type="ProteomicsDB" id="298502">
    <molecule id="Q3UPF5-1"/>
</dbReference>
<dbReference type="ProteomicsDB" id="298503">
    <molecule id="Q3UPF5-2"/>
</dbReference>
<dbReference type="Pumba" id="Q3UPF5"/>
<dbReference type="Antibodypedia" id="46163">
    <property type="antibodies" value="130 antibodies from 29 providers"/>
</dbReference>
<dbReference type="Ensembl" id="ENSMUST00000031850.10">
    <molecule id="Q3UPF5-2"/>
    <property type="protein sequence ID" value="ENSMUSP00000031850.5"/>
    <property type="gene ID" value="ENSMUSG00000029826.15"/>
</dbReference>
<dbReference type="Ensembl" id="ENSMUST00000143702.5">
    <molecule id="Q3UPF5-1"/>
    <property type="protein sequence ID" value="ENSMUSP00000144312.2"/>
    <property type="gene ID" value="ENSMUSG00000029826.15"/>
</dbReference>
<dbReference type="GeneID" id="78781"/>
<dbReference type="KEGG" id="mmu:78781"/>
<dbReference type="UCSC" id="uc009bjz.2">
    <molecule id="Q3UPF5-1"/>
    <property type="organism name" value="mouse"/>
</dbReference>
<dbReference type="UCSC" id="uc009bka.1">
    <molecule id="Q3UPF5-2"/>
    <property type="organism name" value="mouse"/>
</dbReference>
<dbReference type="AGR" id="MGI:1926031"/>
<dbReference type="CTD" id="56829"/>
<dbReference type="MGI" id="MGI:1926031">
    <property type="gene designation" value="Zc3hav1"/>
</dbReference>
<dbReference type="VEuPathDB" id="HostDB:ENSMUSG00000029826"/>
<dbReference type="eggNOG" id="ENOG502QSC4">
    <property type="taxonomic scope" value="Eukaryota"/>
</dbReference>
<dbReference type="GeneTree" id="ENSGT00940000162001"/>
<dbReference type="InParanoid" id="Q3UPF5"/>
<dbReference type="OrthoDB" id="6133115at2759"/>
<dbReference type="PhylomeDB" id="Q3UPF5"/>
<dbReference type="TreeFam" id="TF338389"/>
<dbReference type="BioGRID-ORCS" id="78781">
    <property type="hits" value="7 hits in 78 CRISPR screens"/>
</dbReference>
<dbReference type="ChiTaRS" id="Zc3hav1">
    <property type="organism name" value="mouse"/>
</dbReference>
<dbReference type="PRO" id="PR:Q3UPF5"/>
<dbReference type="Proteomes" id="UP000000589">
    <property type="component" value="Chromosome 6"/>
</dbReference>
<dbReference type="RNAct" id="Q3UPF5">
    <property type="molecule type" value="protein"/>
</dbReference>
<dbReference type="Bgee" id="ENSMUSG00000029826">
    <property type="expression patterns" value="Expressed in paneth cell and 186 other cell types or tissues"/>
</dbReference>
<dbReference type="ExpressionAtlas" id="Q3UPF5">
    <property type="expression patterns" value="baseline and differential"/>
</dbReference>
<dbReference type="GO" id="GO:0005737">
    <property type="term" value="C:cytoplasm"/>
    <property type="evidence" value="ECO:0000266"/>
    <property type="project" value="MGI"/>
</dbReference>
<dbReference type="GO" id="GO:0005634">
    <property type="term" value="C:nucleus"/>
    <property type="evidence" value="ECO:0007669"/>
    <property type="project" value="UniProtKB-SubCell"/>
</dbReference>
<dbReference type="GO" id="GO:0017151">
    <property type="term" value="F:DEAD/H-box RNA helicase binding"/>
    <property type="evidence" value="ECO:0000266"/>
    <property type="project" value="MGI"/>
</dbReference>
<dbReference type="GO" id="GO:0003950">
    <property type="term" value="F:NAD+ poly-ADP-ribosyltransferase activity"/>
    <property type="evidence" value="ECO:0007669"/>
    <property type="project" value="InterPro"/>
</dbReference>
<dbReference type="GO" id="GO:0003723">
    <property type="term" value="F:RNA binding"/>
    <property type="evidence" value="ECO:0007669"/>
    <property type="project" value="UniProtKB-KW"/>
</dbReference>
<dbReference type="GO" id="GO:0008270">
    <property type="term" value="F:zinc ion binding"/>
    <property type="evidence" value="ECO:0007669"/>
    <property type="project" value="UniProtKB-KW"/>
</dbReference>
<dbReference type="GO" id="GO:0071360">
    <property type="term" value="P:cellular response to exogenous dsRNA"/>
    <property type="evidence" value="ECO:0000314"/>
    <property type="project" value="MGI"/>
</dbReference>
<dbReference type="GO" id="GO:0051607">
    <property type="term" value="P:defense response to virus"/>
    <property type="evidence" value="ECO:0007669"/>
    <property type="project" value="UniProtKB-KW"/>
</dbReference>
<dbReference type="GO" id="GO:0045087">
    <property type="term" value="P:innate immune response"/>
    <property type="evidence" value="ECO:0007669"/>
    <property type="project" value="UniProtKB-KW"/>
</dbReference>
<dbReference type="GO" id="GO:0045071">
    <property type="term" value="P:negative regulation of viral genome replication"/>
    <property type="evidence" value="ECO:0000250"/>
    <property type="project" value="UniProtKB"/>
</dbReference>
<dbReference type="GO" id="GO:0043123">
    <property type="term" value="P:positive regulation of canonical NF-kappaB signal transduction"/>
    <property type="evidence" value="ECO:0000266"/>
    <property type="project" value="MGI"/>
</dbReference>
<dbReference type="GO" id="GO:0061014">
    <property type="term" value="P:positive regulation of mRNA catabolic process"/>
    <property type="evidence" value="ECO:0000250"/>
    <property type="project" value="UniProtKB"/>
</dbReference>
<dbReference type="GO" id="GO:1900246">
    <property type="term" value="P:positive regulation of RIG-I signaling pathway"/>
    <property type="evidence" value="ECO:0000304"/>
    <property type="project" value="UniProtKB"/>
</dbReference>
<dbReference type="GO" id="GO:0032481">
    <property type="term" value="P:positive regulation of type I interferon production"/>
    <property type="evidence" value="ECO:0000314"/>
    <property type="project" value="MGI"/>
</dbReference>
<dbReference type="GO" id="GO:0009615">
    <property type="term" value="P:response to virus"/>
    <property type="evidence" value="ECO:0000250"/>
    <property type="project" value="UniProtKB"/>
</dbReference>
<dbReference type="FunFam" id="1.10.10.10:FF:000428">
    <property type="entry name" value="Zinc finger CCCH-type containing, antiviral 1"/>
    <property type="match status" value="1"/>
</dbReference>
<dbReference type="Gene3D" id="3.30.720.50">
    <property type="match status" value="1"/>
</dbReference>
<dbReference type="Gene3D" id="3.90.228.10">
    <property type="match status" value="1"/>
</dbReference>
<dbReference type="Gene3D" id="1.10.10.10">
    <property type="entry name" value="Winged helix-like DNA-binding domain superfamily/Winged helix DNA-binding domain"/>
    <property type="match status" value="1"/>
</dbReference>
<dbReference type="InterPro" id="IPR051712">
    <property type="entry name" value="ARTD-AVP"/>
</dbReference>
<dbReference type="InterPro" id="IPR012317">
    <property type="entry name" value="Poly(ADP-ribose)pol_cat_dom"/>
</dbReference>
<dbReference type="InterPro" id="IPR036388">
    <property type="entry name" value="WH-like_DNA-bd_sf"/>
</dbReference>
<dbReference type="InterPro" id="IPR004170">
    <property type="entry name" value="WWE_dom"/>
</dbReference>
<dbReference type="InterPro" id="IPR037197">
    <property type="entry name" value="WWE_dom_sf"/>
</dbReference>
<dbReference type="InterPro" id="IPR041360">
    <property type="entry name" value="ZAP_HTH"/>
</dbReference>
<dbReference type="InterPro" id="IPR040954">
    <property type="entry name" value="Znf-CCCH_8"/>
</dbReference>
<dbReference type="InterPro" id="IPR000571">
    <property type="entry name" value="Znf_CCCH"/>
</dbReference>
<dbReference type="PANTHER" id="PTHR45740">
    <property type="entry name" value="POLY [ADP-RIBOSE] POLYMERASE"/>
    <property type="match status" value="1"/>
</dbReference>
<dbReference type="PANTHER" id="PTHR45740:SF8">
    <property type="entry name" value="ZINC FINGER CCCH-TYPE ANTIVIRAL PROTEIN 1"/>
    <property type="match status" value="1"/>
</dbReference>
<dbReference type="Pfam" id="PF18606">
    <property type="entry name" value="HTH_53"/>
    <property type="match status" value="1"/>
</dbReference>
<dbReference type="Pfam" id="PF00644">
    <property type="entry name" value="PARP"/>
    <property type="match status" value="1"/>
</dbReference>
<dbReference type="Pfam" id="PF02825">
    <property type="entry name" value="WWE"/>
    <property type="match status" value="1"/>
</dbReference>
<dbReference type="Pfam" id="PF23466">
    <property type="entry name" value="WWE_4"/>
    <property type="match status" value="1"/>
</dbReference>
<dbReference type="Pfam" id="PF18633">
    <property type="entry name" value="zf-CCCH_8"/>
    <property type="match status" value="1"/>
</dbReference>
<dbReference type="Pfam" id="PF25261">
    <property type="entry name" value="zf-CCCH_PARP12"/>
    <property type="match status" value="1"/>
</dbReference>
<dbReference type="SUPFAM" id="SSF56399">
    <property type="entry name" value="ADP-ribosylation"/>
    <property type="match status" value="1"/>
</dbReference>
<dbReference type="SUPFAM" id="SSF117839">
    <property type="entry name" value="WWE domain"/>
    <property type="match status" value="1"/>
</dbReference>
<dbReference type="PROSITE" id="PS51059">
    <property type="entry name" value="PARP_CATALYTIC"/>
    <property type="match status" value="1"/>
</dbReference>
<dbReference type="PROSITE" id="PS50918">
    <property type="entry name" value="WWE"/>
    <property type="match status" value="1"/>
</dbReference>
<dbReference type="PROSITE" id="PS50103">
    <property type="entry name" value="ZF_C3H1"/>
    <property type="match status" value="2"/>
</dbReference>
<organism>
    <name type="scientific">Mus musculus</name>
    <name type="common">Mouse</name>
    <dbReference type="NCBI Taxonomy" id="10090"/>
    <lineage>
        <taxon>Eukaryota</taxon>
        <taxon>Metazoa</taxon>
        <taxon>Chordata</taxon>
        <taxon>Craniata</taxon>
        <taxon>Vertebrata</taxon>
        <taxon>Euteleostomi</taxon>
        <taxon>Mammalia</taxon>
        <taxon>Eutheria</taxon>
        <taxon>Euarchontoglires</taxon>
        <taxon>Glires</taxon>
        <taxon>Rodentia</taxon>
        <taxon>Myomorpha</taxon>
        <taxon>Muroidea</taxon>
        <taxon>Muridae</taxon>
        <taxon>Murinae</taxon>
        <taxon>Mus</taxon>
        <taxon>Mus</taxon>
    </lineage>
</organism>
<sequence>MTDPEVFCFITKILCAHGGRMTLEELLGEISLPEAQLYELLKAAGPDRFVLLETGDQAGITRSVVATTRARVCRRKYCQRPCDSLHLCKLNLLGRCHYAQSQRNLCKYSHDVLSEQNFQVLKNHELSGLNQEELAVLLVQSDPFFMPEICKSYKGEGRKQICGQPQPCERLHICEHFTRGNCSYLNCLRSHNLMDRKVLAIMREHGLSSDVVQNIQDICNNKHTRRNPPSMRAPHPHRRGGAHRDRSKSRDRFHHNSLEVLSTVSPLGSGPPSPDVTGCKDPLEDVSADVTQKFKYLGTQDRAQLSSVSSKAAGVRGPSQMRASQEFLEDGDPDGLFSRNRSDSSTSRTSAAGFPLVAAQRNEAGAMKMGMPSGHHVEVKGKNEDIDRVPFLNSYIDGVTMEEATVSGILGKRATDNGLEEMILSSNHQKSVAKTQDPQTAGRITDSGQDTAFLHSKYEENPAWPGTSTHNGPNGFSQIMDETPNVSKSSPTGFGIKSAVTGGKEAVYSGVQSLRSHVLAMPGETTTPVQGSNRLPPSPLSSSTSHRVAASGSPGKSSTHASVSPASEPSRMMMMMSDPAEYSLCYIVNPVSPRMDDHGLKEICLDHLYRGCQQVNCNKNHFHLPYRWQLFILPTWMDFQDMEYIERAYCDPQIEIIVIEKHRINFKKMTCDSYPIRRLSTPSFVEKTLNSVFTTKWLWYWRNELNEYTQYGHESPSHTSSEINSAYLESFFHSCPRGVLQFHAGSQNYELSFQGMIQTNIASKTQRHVVRRPVFVSSKDVEQKRRGPDHQPVMPQADALTLFSSPQRNASTVSSNEYEFIELNNQDEEYAKISEQFKASMKQFKIVTIKRIWNQKLWDTFERKKQKMKNKTEMFLFHAVGRIHMDYICKNNFEWILHGNREIRYGKGLCWRRENCDSSHAHGFLEMPLASLGRTASLDSSGLQRK</sequence>
<evidence type="ECO:0000250" key="1"/>
<evidence type="ECO:0000250" key="2">
    <source>
        <dbReference type="UniProtKB" id="Q7Z2W4"/>
    </source>
</evidence>
<evidence type="ECO:0000250" key="3">
    <source>
        <dbReference type="UniProtKB" id="Q8K3Y6"/>
    </source>
</evidence>
<evidence type="ECO:0000255" key="4"/>
<evidence type="ECO:0000255" key="5">
    <source>
        <dbReference type="PROSITE-ProRule" id="PRU00248"/>
    </source>
</evidence>
<evidence type="ECO:0000255" key="6">
    <source>
        <dbReference type="PROSITE-ProRule" id="PRU00397"/>
    </source>
</evidence>
<evidence type="ECO:0000255" key="7">
    <source>
        <dbReference type="PROSITE-ProRule" id="PRU00723"/>
    </source>
</evidence>
<evidence type="ECO:0000256" key="8">
    <source>
        <dbReference type="SAM" id="MobiDB-lite"/>
    </source>
</evidence>
<evidence type="ECO:0000269" key="9">
    <source>
    </source>
</evidence>
<evidence type="ECO:0000303" key="10">
    <source>
    </source>
</evidence>
<evidence type="ECO:0000305" key="11"/>
<evidence type="ECO:0007744" key="12">
    <source>
    </source>
</evidence>
<evidence type="ECO:0007744" key="13">
    <source>
    </source>
</evidence>
<evidence type="ECO:0007744" key="14">
    <source>
    </source>
</evidence>
<evidence type="ECO:0007744" key="15">
    <source>
    </source>
</evidence>
<evidence type="ECO:0007744" key="16">
    <source>
    </source>
</evidence>
<evidence type="ECO:0007829" key="17">
    <source>
        <dbReference type="PDB" id="6L1W"/>
    </source>
</evidence>
<evidence type="ECO:0007829" key="18">
    <source>
        <dbReference type="PDB" id="7SZ2"/>
    </source>
</evidence>
<name>ZCCHV_MOUSE</name>
<reference key="1">
    <citation type="journal article" date="2005" name="Science">
        <title>The transcriptional landscape of the mammalian genome.</title>
        <authorList>
            <person name="Carninci P."/>
            <person name="Kasukawa T."/>
            <person name="Katayama S."/>
            <person name="Gough J."/>
            <person name="Frith M.C."/>
            <person name="Maeda N."/>
            <person name="Oyama R."/>
            <person name="Ravasi T."/>
            <person name="Lenhard B."/>
            <person name="Wells C."/>
            <person name="Kodzius R."/>
            <person name="Shimokawa K."/>
            <person name="Bajic V.B."/>
            <person name="Brenner S.E."/>
            <person name="Batalov S."/>
            <person name="Forrest A.R."/>
            <person name="Zavolan M."/>
            <person name="Davis M.J."/>
            <person name="Wilming L.G."/>
            <person name="Aidinis V."/>
            <person name="Allen J.E."/>
            <person name="Ambesi-Impiombato A."/>
            <person name="Apweiler R."/>
            <person name="Aturaliya R.N."/>
            <person name="Bailey T.L."/>
            <person name="Bansal M."/>
            <person name="Baxter L."/>
            <person name="Beisel K.W."/>
            <person name="Bersano T."/>
            <person name="Bono H."/>
            <person name="Chalk A.M."/>
            <person name="Chiu K.P."/>
            <person name="Choudhary V."/>
            <person name="Christoffels A."/>
            <person name="Clutterbuck D.R."/>
            <person name="Crowe M.L."/>
            <person name="Dalla E."/>
            <person name="Dalrymple B.P."/>
            <person name="de Bono B."/>
            <person name="Della Gatta G."/>
            <person name="di Bernardo D."/>
            <person name="Down T."/>
            <person name="Engstrom P."/>
            <person name="Fagiolini M."/>
            <person name="Faulkner G."/>
            <person name="Fletcher C.F."/>
            <person name="Fukushima T."/>
            <person name="Furuno M."/>
            <person name="Futaki S."/>
            <person name="Gariboldi M."/>
            <person name="Georgii-Hemming P."/>
            <person name="Gingeras T.R."/>
            <person name="Gojobori T."/>
            <person name="Green R.E."/>
            <person name="Gustincich S."/>
            <person name="Harbers M."/>
            <person name="Hayashi Y."/>
            <person name="Hensch T.K."/>
            <person name="Hirokawa N."/>
            <person name="Hill D."/>
            <person name="Huminiecki L."/>
            <person name="Iacono M."/>
            <person name="Ikeo K."/>
            <person name="Iwama A."/>
            <person name="Ishikawa T."/>
            <person name="Jakt M."/>
            <person name="Kanapin A."/>
            <person name="Katoh M."/>
            <person name="Kawasawa Y."/>
            <person name="Kelso J."/>
            <person name="Kitamura H."/>
            <person name="Kitano H."/>
            <person name="Kollias G."/>
            <person name="Krishnan S.P."/>
            <person name="Kruger A."/>
            <person name="Kummerfeld S.K."/>
            <person name="Kurochkin I.V."/>
            <person name="Lareau L.F."/>
            <person name="Lazarevic D."/>
            <person name="Lipovich L."/>
            <person name="Liu J."/>
            <person name="Liuni S."/>
            <person name="McWilliam S."/>
            <person name="Madan Babu M."/>
            <person name="Madera M."/>
            <person name="Marchionni L."/>
            <person name="Matsuda H."/>
            <person name="Matsuzawa S."/>
            <person name="Miki H."/>
            <person name="Mignone F."/>
            <person name="Miyake S."/>
            <person name="Morris K."/>
            <person name="Mottagui-Tabar S."/>
            <person name="Mulder N."/>
            <person name="Nakano N."/>
            <person name="Nakauchi H."/>
            <person name="Ng P."/>
            <person name="Nilsson R."/>
            <person name="Nishiguchi S."/>
            <person name="Nishikawa S."/>
            <person name="Nori F."/>
            <person name="Ohara O."/>
            <person name="Okazaki Y."/>
            <person name="Orlando V."/>
            <person name="Pang K.C."/>
            <person name="Pavan W.J."/>
            <person name="Pavesi G."/>
            <person name="Pesole G."/>
            <person name="Petrovsky N."/>
            <person name="Piazza S."/>
            <person name="Reed J."/>
            <person name="Reid J.F."/>
            <person name="Ring B.Z."/>
            <person name="Ringwald M."/>
            <person name="Rost B."/>
            <person name="Ruan Y."/>
            <person name="Salzberg S.L."/>
            <person name="Sandelin A."/>
            <person name="Schneider C."/>
            <person name="Schoenbach C."/>
            <person name="Sekiguchi K."/>
            <person name="Semple C.A."/>
            <person name="Seno S."/>
            <person name="Sessa L."/>
            <person name="Sheng Y."/>
            <person name="Shibata Y."/>
            <person name="Shimada H."/>
            <person name="Shimada K."/>
            <person name="Silva D."/>
            <person name="Sinclair B."/>
            <person name="Sperling S."/>
            <person name="Stupka E."/>
            <person name="Sugiura K."/>
            <person name="Sultana R."/>
            <person name="Takenaka Y."/>
            <person name="Taki K."/>
            <person name="Tammoja K."/>
            <person name="Tan S.L."/>
            <person name="Tang S."/>
            <person name="Taylor M.S."/>
            <person name="Tegner J."/>
            <person name="Teichmann S.A."/>
            <person name="Ueda H.R."/>
            <person name="van Nimwegen E."/>
            <person name="Verardo R."/>
            <person name="Wei C.L."/>
            <person name="Yagi K."/>
            <person name="Yamanishi H."/>
            <person name="Zabarovsky E."/>
            <person name="Zhu S."/>
            <person name="Zimmer A."/>
            <person name="Hide W."/>
            <person name="Bult C."/>
            <person name="Grimmond S.M."/>
            <person name="Teasdale R.D."/>
            <person name="Liu E.T."/>
            <person name="Brusic V."/>
            <person name="Quackenbush J."/>
            <person name="Wahlestedt C."/>
            <person name="Mattick J.S."/>
            <person name="Hume D.A."/>
            <person name="Kai C."/>
            <person name="Sasaki D."/>
            <person name="Tomaru Y."/>
            <person name="Fukuda S."/>
            <person name="Kanamori-Katayama M."/>
            <person name="Suzuki M."/>
            <person name="Aoki J."/>
            <person name="Arakawa T."/>
            <person name="Iida J."/>
            <person name="Imamura K."/>
            <person name="Itoh M."/>
            <person name="Kato T."/>
            <person name="Kawaji H."/>
            <person name="Kawagashira N."/>
            <person name="Kawashima T."/>
            <person name="Kojima M."/>
            <person name="Kondo S."/>
            <person name="Konno H."/>
            <person name="Nakano K."/>
            <person name="Ninomiya N."/>
            <person name="Nishio T."/>
            <person name="Okada M."/>
            <person name="Plessy C."/>
            <person name="Shibata K."/>
            <person name="Shiraki T."/>
            <person name="Suzuki S."/>
            <person name="Tagami M."/>
            <person name="Waki K."/>
            <person name="Watahiki A."/>
            <person name="Okamura-Oho Y."/>
            <person name="Suzuki H."/>
            <person name="Kawai J."/>
            <person name="Hayashizaki Y."/>
        </authorList>
    </citation>
    <scope>NUCLEOTIDE SEQUENCE [LARGE SCALE MRNA] (ISOFORMS 1 AND 2)</scope>
    <source>
        <strain>C57BL/6J</strain>
        <strain>NOD</strain>
        <tissue>Amnion</tissue>
        <tissue>Cecum</tissue>
        <tissue>Lung</tissue>
        <tissue>Spleen</tissue>
        <tissue>Thymus</tissue>
    </source>
</reference>
<reference key="2">
    <citation type="journal article" date="2007" name="J. Immunol.">
        <title>Quantitative time-resolved phosphoproteomic analysis of mast cell signaling.</title>
        <authorList>
            <person name="Cao L."/>
            <person name="Yu K."/>
            <person name="Banh C."/>
            <person name="Nguyen V."/>
            <person name="Ritz A."/>
            <person name="Raphael B.J."/>
            <person name="Kawakami Y."/>
            <person name="Kawakami T."/>
            <person name="Salomon A.R."/>
        </authorList>
    </citation>
    <scope>PHOSPHORYLATION [LARGE SCALE ANALYSIS] AT TYR-508</scope>
    <scope>IDENTIFICATION BY MASS SPECTROMETRY [LARGE SCALE ANALYSIS]</scope>
    <source>
        <tissue>Mast cell</tissue>
    </source>
</reference>
<reference key="3">
    <citation type="journal article" date="2007" name="Proc. Natl. Acad. Sci. U.S.A.">
        <title>Large-scale phosphorylation analysis of mouse liver.</title>
        <authorList>
            <person name="Villen J."/>
            <person name="Beausoleil S.A."/>
            <person name="Gerber S.A."/>
            <person name="Gygi S.P."/>
        </authorList>
    </citation>
    <scope>PHOSPHORYLATION [LARGE SCALE ANALYSIS] AT SER-324</scope>
    <scope>IDENTIFICATION BY MASS SPECTROMETRY [LARGE SCALE ANALYSIS]</scope>
    <source>
        <tissue>Liver</tissue>
    </source>
</reference>
<reference key="4">
    <citation type="journal article" date="2009" name="Immunity">
        <title>The phagosomal proteome in interferon-gamma-activated macrophages.</title>
        <authorList>
            <person name="Trost M."/>
            <person name="English L."/>
            <person name="Lemieux S."/>
            <person name="Courcelles M."/>
            <person name="Desjardins M."/>
            <person name="Thibault P."/>
        </authorList>
    </citation>
    <scope>PHOSPHORYLATION [LARGE SCALE ANALYSIS] AT SER-273 AND SER-324</scope>
    <scope>IDENTIFICATION BY MASS SPECTROMETRY [LARGE SCALE ANALYSIS]</scope>
</reference>
<reference key="5">
    <citation type="journal article" date="2009" name="Mol. Cell. Proteomics">
        <title>Large scale localization of protein phosphorylation by use of electron capture dissociation mass spectrometry.</title>
        <authorList>
            <person name="Sweet S.M."/>
            <person name="Bailey C.M."/>
            <person name="Cunningham D.L."/>
            <person name="Heath J.K."/>
            <person name="Cooper H.J."/>
        </authorList>
    </citation>
    <scope>PHOSPHORYLATION [LARGE SCALE ANALYSIS] AT TYR-508 AND SER-553</scope>
    <scope>IDENTIFICATION BY MASS SPECTROMETRY [LARGE SCALE ANALYSIS]</scope>
    <source>
        <tissue>Embryonic fibroblast</tissue>
    </source>
</reference>
<reference key="6">
    <citation type="journal article" date="2010" name="Cell">
        <title>A tissue-specific atlas of mouse protein phosphorylation and expression.</title>
        <authorList>
            <person name="Huttlin E.L."/>
            <person name="Jedrychowski M.P."/>
            <person name="Elias J.E."/>
            <person name="Goswami T."/>
            <person name="Rad R."/>
            <person name="Beausoleil S.A."/>
            <person name="Villen J."/>
            <person name="Haas W."/>
            <person name="Sowa M.E."/>
            <person name="Gygi S.P."/>
        </authorList>
    </citation>
    <scope>PHOSPHORYLATION [LARGE SCALE ANALYSIS] AT SER-257; SER-265; SER-269; SER-273; THR-277; SER-324 AND SER-350</scope>
    <scope>IDENTIFICATION BY MASS SPECTROMETRY [LARGE SCALE ANALYSIS]</scope>
    <source>
        <tissue>Kidney</tissue>
        <tissue>Liver</tissue>
        <tissue>Lung</tissue>
        <tissue>Pancreas</tissue>
        <tissue>Spleen</tissue>
        <tissue>Testis</tissue>
    </source>
</reference>
<reference key="7">
    <citation type="journal article" date="2011" name="Nat. Immunol.">
        <title>ZAPS is a potent stimulator of signaling mediated by the RNA helicase RIG-I during antiviral responses.</title>
        <authorList>
            <person name="Hayakawa S."/>
            <person name="Shiratori S."/>
            <person name="Yamato H."/>
            <person name="Kameyama T."/>
            <person name="Kitatsuji C."/>
            <person name="Kashigi F."/>
            <person name="Goto S."/>
            <person name="Kameoka S."/>
            <person name="Fujikura D."/>
            <person name="Yamada T."/>
            <person name="Mizutani T."/>
            <person name="Kazumata M."/>
            <person name="Sato M."/>
            <person name="Tanaka J."/>
            <person name="Asaka M."/>
            <person name="Ohba Y."/>
            <person name="Miyazaki T."/>
            <person name="Imamura M."/>
            <person name="Takaoka A."/>
        </authorList>
    </citation>
    <scope>FUNCTION</scope>
</reference>
<comment type="function">
    <text evidence="9">Antiviral protein which inhibits the replication of viruses by recruiting the cellular RNA degradation machineries to degrade the viral mRNAs. Binds to a ZAP-responsive element (ZRE) present in the target viral mRNA, recruits cellular poly(A)-specific ribonuclease PARN to remove the poly(A) tail, and the 3'-5' exoribonuclease complex exosome to degrade the RNA body from the 3'-end. It also recruits the decapping complex DCP1-DCP2 through RNA helicase p72 (DDX17) to remove the cap structure of the viral mRNA to initiate its degradation from the 5'-end. Its target viruses belong to families which include retroviridae: human immunodeficiency virus type 1 (HIV-1) and moloney and murine leukemia virus (MoMLV), filoviridae: ebola virus (EBOV) and marburg virus (MARV), togaviridae: sindbis virus (SINV) and Ross river virus (RRV). Specifically targets the multiply spliced but not unspliced or singly spliced HIV-1 mRNAs for degradation. Isoform 1 is a more potent viral inhibitor than isoform 2. Isoform 2 acts as a positive regulator of RIG-I signaling resulting in activation of the downstream effector IRF3 leading to the expression of type I IFNs and IFN stimulated genes (ISGs).</text>
</comment>
<comment type="subunit">
    <text evidence="1">Homodimer or homooligomer. Homooligomerization is essential for its antiviral activity (By similarity). Interacts with EXOSC5 (By similarity). Interacts (via N-terminal domain) with DDX17 in an RNA-independent manner (By similarity). Interacts with EXOSC3, EXOSC7, DCP2 and DCP1A (By similarity). Interacts with PARN in an RNA-independent manner (By similarity). Interacts with XRN1 in an RNA-dependent manner (By similarity). Interacts (via N-terminal domain) with DHX30 (via N-terminus) in an RNA-independent manner (By similarity). Isoform 2 interacts (via zinc-fingers) with RIGI in an RNA-dependent manner (By similarity).</text>
</comment>
<comment type="subcellular location">
    <subcellularLocation>
        <location evidence="3">Cytoplasm</location>
    </subcellularLocation>
    <subcellularLocation>
        <location evidence="3">Nucleus</location>
    </subcellularLocation>
    <text evidence="3">Localizes in the cytoplasm at steady state, but shuttles between nucleus and cytoplasm in a XPO1-dependent manner.</text>
</comment>
<comment type="alternative products">
    <event type="alternative splicing"/>
    <isoform>
        <id>Q3UPF5-1</id>
        <name>1</name>
        <name>ZAPL</name>
        <sequence type="displayed"/>
    </isoform>
    <isoform>
        <id>Q3UPF5-2</id>
        <name>2</name>
        <name>ZAPS</name>
        <sequence type="described" ref="VSP_033213 VSP_033214"/>
    </isoform>
</comment>
<comment type="domain">
    <text evidence="2">The N-terminal domain is sufficient to bind to viral RNAs and promote their degradation. The second and fourth zinc fingers are involved in binding to specific viral RNAs. Contains a divergent PARP homology ADP-ribosyltransferase domain which lacks the structural requirements for NAD[+] binding. It is therefore inactive.</text>
</comment>
<comment type="PTM">
    <text evidence="3">Phosphorylation at Ser-273 is essential for sequential phosphorylation of Ser-269, Ser-265, Ser-262 and Ser-257 by GSK3-beta. Phosphorylation by GSK3-beta enhances its antiviral activity (By similarity).</text>
</comment>
<comment type="similarity">
    <text evidence="11">Belongs to the ARTD/PARP family.</text>
</comment>
<keyword id="KW-0002">3D-structure</keyword>
<keyword id="KW-0025">Alternative splicing</keyword>
<keyword id="KW-0051">Antiviral defense</keyword>
<keyword id="KW-0963">Cytoplasm</keyword>
<keyword id="KW-0391">Immunity</keyword>
<keyword id="KW-0399">Innate immunity</keyword>
<keyword id="KW-0479">Metal-binding</keyword>
<keyword id="KW-0539">Nucleus</keyword>
<keyword id="KW-0597">Phosphoprotein</keyword>
<keyword id="KW-1185">Reference proteome</keyword>
<keyword id="KW-0677">Repeat</keyword>
<keyword id="KW-0694">RNA-binding</keyword>
<keyword id="KW-0862">Zinc</keyword>
<keyword id="KW-0863">Zinc-finger</keyword>
<protein>
    <recommendedName>
        <fullName>Zinc finger CCCH-type antiviral protein 1</fullName>
    </recommendedName>
    <alternativeName>
        <fullName>ADP-ribosyltransferase diphtheria toxin-like 13</fullName>
        <shortName>ARTD13</shortName>
    </alternativeName>
    <alternativeName>
        <fullName evidence="11">Inactive Poly [ADP-ribose] polymerase 13</fullName>
        <shortName evidence="11">PARP13</shortName>
    </alternativeName>
</protein>
<accession>Q3UPF5</accession>
<accession>Q9CTU4</accession>
<accession>Q9DBS7</accession>